<proteinExistence type="inferred from homology"/>
<gene>
    <name evidence="1" type="primary">rpsF</name>
    <name type="ordered locus">Sama_3064</name>
</gene>
<keyword id="KW-1185">Reference proteome</keyword>
<keyword id="KW-0687">Ribonucleoprotein</keyword>
<keyword id="KW-0689">Ribosomal protein</keyword>
<keyword id="KW-0694">RNA-binding</keyword>
<keyword id="KW-0699">rRNA-binding</keyword>
<accession>A1SA60</accession>
<name>RS6_SHEAM</name>
<evidence type="ECO:0000255" key="1">
    <source>
        <dbReference type="HAMAP-Rule" id="MF_00360"/>
    </source>
</evidence>
<evidence type="ECO:0000256" key="2">
    <source>
        <dbReference type="SAM" id="MobiDB-lite"/>
    </source>
</evidence>
<evidence type="ECO:0000305" key="3"/>
<comment type="function">
    <text evidence="1">Binds together with bS18 to 16S ribosomal RNA.</text>
</comment>
<comment type="similarity">
    <text evidence="1">Belongs to the bacterial ribosomal protein bS6 family.</text>
</comment>
<organism>
    <name type="scientific">Shewanella amazonensis (strain ATCC BAA-1098 / SB2B)</name>
    <dbReference type="NCBI Taxonomy" id="326297"/>
    <lineage>
        <taxon>Bacteria</taxon>
        <taxon>Pseudomonadati</taxon>
        <taxon>Pseudomonadota</taxon>
        <taxon>Gammaproteobacteria</taxon>
        <taxon>Alteromonadales</taxon>
        <taxon>Shewanellaceae</taxon>
        <taxon>Shewanella</taxon>
    </lineage>
</organism>
<protein>
    <recommendedName>
        <fullName evidence="1">Small ribosomal subunit protein bS6</fullName>
    </recommendedName>
    <alternativeName>
        <fullName evidence="3">30S ribosomal protein S6</fullName>
    </alternativeName>
</protein>
<reference key="1">
    <citation type="submission" date="2006-12" db="EMBL/GenBank/DDBJ databases">
        <title>Complete sequence of Shewanella amazonensis SB2B.</title>
        <authorList>
            <consortium name="US DOE Joint Genome Institute"/>
            <person name="Copeland A."/>
            <person name="Lucas S."/>
            <person name="Lapidus A."/>
            <person name="Barry K."/>
            <person name="Detter J.C."/>
            <person name="Glavina del Rio T."/>
            <person name="Hammon N."/>
            <person name="Israni S."/>
            <person name="Dalin E."/>
            <person name="Tice H."/>
            <person name="Pitluck S."/>
            <person name="Munk A.C."/>
            <person name="Brettin T."/>
            <person name="Bruce D."/>
            <person name="Han C."/>
            <person name="Tapia R."/>
            <person name="Gilna P."/>
            <person name="Schmutz J."/>
            <person name="Larimer F."/>
            <person name="Land M."/>
            <person name="Hauser L."/>
            <person name="Kyrpides N."/>
            <person name="Mikhailova N."/>
            <person name="Fredrickson J."/>
            <person name="Richardson P."/>
        </authorList>
    </citation>
    <scope>NUCLEOTIDE SEQUENCE [LARGE SCALE GENOMIC DNA]</scope>
    <source>
        <strain>ATCC BAA-1098 / SB2B</strain>
    </source>
</reference>
<sequence length="135" mass="15382">MRHYEIVFMVHPDQSEQVAGMIERYTGVITDANGKIHRLEDWGRRQLAYPIQDLHKAHYVLMNVEATAESVEELETAFRFNDAVLRSMVMRTKGAITEASPMAKAKDERDARRAAISERSSEADEVEENAEESAE</sequence>
<dbReference type="EMBL" id="CP000507">
    <property type="protein sequence ID" value="ABM01267.1"/>
    <property type="molecule type" value="Genomic_DNA"/>
</dbReference>
<dbReference type="RefSeq" id="WP_011761171.1">
    <property type="nucleotide sequence ID" value="NC_008700.1"/>
</dbReference>
<dbReference type="SMR" id="A1SA60"/>
<dbReference type="STRING" id="326297.Sama_3064"/>
<dbReference type="KEGG" id="saz:Sama_3064"/>
<dbReference type="eggNOG" id="COG0360">
    <property type="taxonomic scope" value="Bacteria"/>
</dbReference>
<dbReference type="HOGENOM" id="CLU_113441_6_1_6"/>
<dbReference type="OrthoDB" id="9812702at2"/>
<dbReference type="Proteomes" id="UP000009175">
    <property type="component" value="Chromosome"/>
</dbReference>
<dbReference type="GO" id="GO:0022627">
    <property type="term" value="C:cytosolic small ribosomal subunit"/>
    <property type="evidence" value="ECO:0007669"/>
    <property type="project" value="TreeGrafter"/>
</dbReference>
<dbReference type="GO" id="GO:0070181">
    <property type="term" value="F:small ribosomal subunit rRNA binding"/>
    <property type="evidence" value="ECO:0007669"/>
    <property type="project" value="TreeGrafter"/>
</dbReference>
<dbReference type="GO" id="GO:0003735">
    <property type="term" value="F:structural constituent of ribosome"/>
    <property type="evidence" value="ECO:0007669"/>
    <property type="project" value="InterPro"/>
</dbReference>
<dbReference type="GO" id="GO:0006412">
    <property type="term" value="P:translation"/>
    <property type="evidence" value="ECO:0007669"/>
    <property type="project" value="UniProtKB-UniRule"/>
</dbReference>
<dbReference type="CDD" id="cd00473">
    <property type="entry name" value="bS6"/>
    <property type="match status" value="1"/>
</dbReference>
<dbReference type="FunFam" id="3.30.70.60:FF:000003">
    <property type="entry name" value="30S ribosomal protein S6"/>
    <property type="match status" value="1"/>
</dbReference>
<dbReference type="Gene3D" id="3.30.70.60">
    <property type="match status" value="1"/>
</dbReference>
<dbReference type="HAMAP" id="MF_00360">
    <property type="entry name" value="Ribosomal_bS6"/>
    <property type="match status" value="1"/>
</dbReference>
<dbReference type="InterPro" id="IPR000529">
    <property type="entry name" value="Ribosomal_bS6"/>
</dbReference>
<dbReference type="InterPro" id="IPR035980">
    <property type="entry name" value="Ribosomal_bS6_sf"/>
</dbReference>
<dbReference type="InterPro" id="IPR020814">
    <property type="entry name" value="Ribosomal_S6_plastid/chlpt"/>
</dbReference>
<dbReference type="InterPro" id="IPR014717">
    <property type="entry name" value="Transl_elong_EF1B/ribsomal_bS6"/>
</dbReference>
<dbReference type="NCBIfam" id="TIGR00166">
    <property type="entry name" value="S6"/>
    <property type="match status" value="1"/>
</dbReference>
<dbReference type="PANTHER" id="PTHR21011">
    <property type="entry name" value="MITOCHONDRIAL 28S RIBOSOMAL PROTEIN S6"/>
    <property type="match status" value="1"/>
</dbReference>
<dbReference type="PANTHER" id="PTHR21011:SF1">
    <property type="entry name" value="SMALL RIBOSOMAL SUBUNIT PROTEIN BS6M"/>
    <property type="match status" value="1"/>
</dbReference>
<dbReference type="Pfam" id="PF01250">
    <property type="entry name" value="Ribosomal_S6"/>
    <property type="match status" value="1"/>
</dbReference>
<dbReference type="SUPFAM" id="SSF54995">
    <property type="entry name" value="Ribosomal protein S6"/>
    <property type="match status" value="1"/>
</dbReference>
<feature type="chain" id="PRO_1000005343" description="Small ribosomal subunit protein bS6">
    <location>
        <begin position="1"/>
        <end position="135"/>
    </location>
</feature>
<feature type="region of interest" description="Disordered" evidence="2">
    <location>
        <begin position="98"/>
        <end position="135"/>
    </location>
</feature>
<feature type="compositionally biased region" description="Basic and acidic residues" evidence="2">
    <location>
        <begin position="104"/>
        <end position="122"/>
    </location>
</feature>
<feature type="compositionally biased region" description="Acidic residues" evidence="2">
    <location>
        <begin position="123"/>
        <end position="135"/>
    </location>
</feature>